<protein>
    <recommendedName>
        <fullName>Ubiquitin-conjugating enzyme E2 13</fullName>
        <ecNumber>2.3.2.23</ecNumber>
    </recommendedName>
    <alternativeName>
        <fullName>E2 ubiquitin-conjugating enzyme 13</fullName>
    </alternativeName>
    <alternativeName>
        <fullName>Ubiquitin carrier protein 13</fullName>
    </alternativeName>
    <alternativeName>
        <fullName>Ubiquitin-protein ligase 13</fullName>
    </alternativeName>
</protein>
<proteinExistence type="evidence at transcript level"/>
<accession>Q42541</accession>
<accession>Q4TYZ7</accession>
<reference key="1">
    <citation type="journal article" date="1996" name="J. Biol. Chem.">
        <title>The Arabidopsis thaliana UBC7/13/14 genes encode a family of multiubiquitin chain-forming E2 enzymes.</title>
        <authorList>
            <person name="van Nocker S."/>
            <person name="Walker J.M."/>
            <person name="Vierstra R.D."/>
        </authorList>
    </citation>
    <scope>NUCLEOTIDE SEQUENCE [GENOMIC DNA]</scope>
    <scope>FUNCTION</scope>
    <source>
        <strain>cv. Columbia</strain>
        <tissue>Seedling</tissue>
    </source>
</reference>
<reference key="2">
    <citation type="journal article" date="2005" name="Plant Physiol.">
        <title>Genome analysis and functional characterization of the E2 and RING-type E3 ligase ubiquitination enzymes of Arabidopsis.</title>
        <authorList>
            <person name="Kraft E."/>
            <person name="Stone S.L."/>
            <person name="Ma L."/>
            <person name="Su N."/>
            <person name="Gao Y."/>
            <person name="Lau O.-S."/>
            <person name="Deng X.-W."/>
            <person name="Callis J."/>
        </authorList>
    </citation>
    <scope>NUCLEOTIDE SEQUENCE [MRNA]</scope>
    <scope>INDUCTION</scope>
    <scope>GENE FAMILY</scope>
    <scope>NOMENCLATURE</scope>
</reference>
<reference key="3">
    <citation type="journal article" date="2000" name="Nature">
        <title>Sequence and analysis of chromosome 3 of the plant Arabidopsis thaliana.</title>
        <authorList>
            <person name="Salanoubat M."/>
            <person name="Lemcke K."/>
            <person name="Rieger M."/>
            <person name="Ansorge W."/>
            <person name="Unseld M."/>
            <person name="Fartmann B."/>
            <person name="Valle G."/>
            <person name="Bloecker H."/>
            <person name="Perez-Alonso M."/>
            <person name="Obermaier B."/>
            <person name="Delseny M."/>
            <person name="Boutry M."/>
            <person name="Grivell L.A."/>
            <person name="Mache R."/>
            <person name="Puigdomenech P."/>
            <person name="De Simone V."/>
            <person name="Choisne N."/>
            <person name="Artiguenave F."/>
            <person name="Robert C."/>
            <person name="Brottier P."/>
            <person name="Wincker P."/>
            <person name="Cattolico L."/>
            <person name="Weissenbach J."/>
            <person name="Saurin W."/>
            <person name="Quetier F."/>
            <person name="Schaefer M."/>
            <person name="Mueller-Auer S."/>
            <person name="Gabel C."/>
            <person name="Fuchs M."/>
            <person name="Benes V."/>
            <person name="Wurmbach E."/>
            <person name="Drzonek H."/>
            <person name="Erfle H."/>
            <person name="Jordan N."/>
            <person name="Bangert S."/>
            <person name="Wiedelmann R."/>
            <person name="Kranz H."/>
            <person name="Voss H."/>
            <person name="Holland R."/>
            <person name="Brandt P."/>
            <person name="Nyakatura G."/>
            <person name="Vezzi A."/>
            <person name="D'Angelo M."/>
            <person name="Pallavicini A."/>
            <person name="Toppo S."/>
            <person name="Simionati B."/>
            <person name="Conrad A."/>
            <person name="Hornischer K."/>
            <person name="Kauer G."/>
            <person name="Loehnert T.-H."/>
            <person name="Nordsiek G."/>
            <person name="Reichelt J."/>
            <person name="Scharfe M."/>
            <person name="Schoen O."/>
            <person name="Bargues M."/>
            <person name="Terol J."/>
            <person name="Climent J."/>
            <person name="Navarro P."/>
            <person name="Collado C."/>
            <person name="Perez-Perez A."/>
            <person name="Ottenwaelder B."/>
            <person name="Duchemin D."/>
            <person name="Cooke R."/>
            <person name="Laudie M."/>
            <person name="Berger-Llauro C."/>
            <person name="Purnelle B."/>
            <person name="Masuy D."/>
            <person name="de Haan M."/>
            <person name="Maarse A.C."/>
            <person name="Alcaraz J.-P."/>
            <person name="Cottet A."/>
            <person name="Casacuberta E."/>
            <person name="Monfort A."/>
            <person name="Argiriou A."/>
            <person name="Flores M."/>
            <person name="Liguori R."/>
            <person name="Vitale D."/>
            <person name="Mannhaupt G."/>
            <person name="Haase D."/>
            <person name="Schoof H."/>
            <person name="Rudd S."/>
            <person name="Zaccaria P."/>
            <person name="Mewes H.-W."/>
            <person name="Mayer K.F.X."/>
            <person name="Kaul S."/>
            <person name="Town C.D."/>
            <person name="Koo H.L."/>
            <person name="Tallon L.J."/>
            <person name="Jenkins J."/>
            <person name="Rooney T."/>
            <person name="Rizzo M."/>
            <person name="Walts A."/>
            <person name="Utterback T."/>
            <person name="Fujii C.Y."/>
            <person name="Shea T.P."/>
            <person name="Creasy T.H."/>
            <person name="Haas B."/>
            <person name="Maiti R."/>
            <person name="Wu D."/>
            <person name="Peterson J."/>
            <person name="Van Aken S."/>
            <person name="Pai G."/>
            <person name="Militscher J."/>
            <person name="Sellers P."/>
            <person name="Gill J.E."/>
            <person name="Feldblyum T.V."/>
            <person name="Preuss D."/>
            <person name="Lin X."/>
            <person name="Nierman W.C."/>
            <person name="Salzberg S.L."/>
            <person name="White O."/>
            <person name="Venter J.C."/>
            <person name="Fraser C.M."/>
            <person name="Kaneko T."/>
            <person name="Nakamura Y."/>
            <person name="Sato S."/>
            <person name="Kato T."/>
            <person name="Asamizu E."/>
            <person name="Sasamoto S."/>
            <person name="Kimura T."/>
            <person name="Idesawa K."/>
            <person name="Kawashima K."/>
            <person name="Kishida Y."/>
            <person name="Kiyokawa C."/>
            <person name="Kohara M."/>
            <person name="Matsumoto M."/>
            <person name="Matsuno A."/>
            <person name="Muraki A."/>
            <person name="Nakayama S."/>
            <person name="Nakazaki N."/>
            <person name="Shinpo S."/>
            <person name="Takeuchi C."/>
            <person name="Wada T."/>
            <person name="Watanabe A."/>
            <person name="Yamada M."/>
            <person name="Yasuda M."/>
            <person name="Tabata S."/>
        </authorList>
    </citation>
    <scope>NUCLEOTIDE SEQUENCE [LARGE SCALE GENOMIC DNA]</scope>
    <source>
        <strain>cv. Columbia</strain>
    </source>
</reference>
<reference key="4">
    <citation type="journal article" date="2017" name="Plant J.">
        <title>Araport11: a complete reannotation of the Arabidopsis thaliana reference genome.</title>
        <authorList>
            <person name="Cheng C.Y."/>
            <person name="Krishnakumar V."/>
            <person name="Chan A.P."/>
            <person name="Thibaud-Nissen F."/>
            <person name="Schobel S."/>
            <person name="Town C.D."/>
        </authorList>
    </citation>
    <scope>GENOME REANNOTATION</scope>
    <source>
        <strain>cv. Columbia</strain>
    </source>
</reference>
<reference key="5">
    <citation type="journal article" date="2003" name="Science">
        <title>Empirical analysis of transcriptional activity in the Arabidopsis genome.</title>
        <authorList>
            <person name="Yamada K."/>
            <person name="Lim J."/>
            <person name="Dale J.M."/>
            <person name="Chen H."/>
            <person name="Shinn P."/>
            <person name="Palm C.J."/>
            <person name="Southwick A.M."/>
            <person name="Wu H.C."/>
            <person name="Kim C.J."/>
            <person name="Nguyen M."/>
            <person name="Pham P.K."/>
            <person name="Cheuk R.F."/>
            <person name="Karlin-Newmann G."/>
            <person name="Liu S.X."/>
            <person name="Lam B."/>
            <person name="Sakano H."/>
            <person name="Wu T."/>
            <person name="Yu G."/>
            <person name="Miranda M."/>
            <person name="Quach H.L."/>
            <person name="Tripp M."/>
            <person name="Chang C.H."/>
            <person name="Lee J.M."/>
            <person name="Toriumi M.J."/>
            <person name="Chan M.M."/>
            <person name="Tang C.C."/>
            <person name="Onodera C.S."/>
            <person name="Deng J.M."/>
            <person name="Akiyama K."/>
            <person name="Ansari Y."/>
            <person name="Arakawa T."/>
            <person name="Banh J."/>
            <person name="Banno F."/>
            <person name="Bowser L."/>
            <person name="Brooks S.Y."/>
            <person name="Carninci P."/>
            <person name="Chao Q."/>
            <person name="Choy N."/>
            <person name="Enju A."/>
            <person name="Goldsmith A.D."/>
            <person name="Gurjal M."/>
            <person name="Hansen N.F."/>
            <person name="Hayashizaki Y."/>
            <person name="Johnson-Hopson C."/>
            <person name="Hsuan V.W."/>
            <person name="Iida K."/>
            <person name="Karnes M."/>
            <person name="Khan S."/>
            <person name="Koesema E."/>
            <person name="Ishida J."/>
            <person name="Jiang P.X."/>
            <person name="Jones T."/>
            <person name="Kawai J."/>
            <person name="Kamiya A."/>
            <person name="Meyers C."/>
            <person name="Nakajima M."/>
            <person name="Narusaka M."/>
            <person name="Seki M."/>
            <person name="Sakurai T."/>
            <person name="Satou M."/>
            <person name="Tamse R."/>
            <person name="Vaysberg M."/>
            <person name="Wallender E.K."/>
            <person name="Wong C."/>
            <person name="Yamamura Y."/>
            <person name="Yuan S."/>
            <person name="Shinozaki K."/>
            <person name="Davis R.W."/>
            <person name="Theologis A."/>
            <person name="Ecker J.R."/>
        </authorList>
    </citation>
    <scope>NUCLEOTIDE SEQUENCE [LARGE SCALE MRNA]</scope>
    <source>
        <strain>cv. Columbia</strain>
    </source>
</reference>
<feature type="chain" id="PRO_0000082587" description="Ubiquitin-conjugating enzyme E2 13">
    <location>
        <begin position="1"/>
        <end position="166"/>
    </location>
</feature>
<feature type="domain" description="UBC core" evidence="1">
    <location>
        <begin position="4"/>
        <end position="164"/>
    </location>
</feature>
<feature type="active site" description="Glycyl thioester intermediate" evidence="1 2">
    <location>
        <position position="89"/>
    </location>
</feature>
<dbReference type="EC" id="2.3.2.23"/>
<dbReference type="EMBL" id="U33758">
    <property type="protein sequence ID" value="AAC49322.1"/>
    <property type="molecule type" value="Genomic_DNA"/>
</dbReference>
<dbReference type="EMBL" id="DQ027027">
    <property type="protein sequence ID" value="AAY44853.1"/>
    <property type="molecule type" value="mRNA"/>
</dbReference>
<dbReference type="EMBL" id="AL133298">
    <property type="protein sequence ID" value="CAB62037.1"/>
    <property type="molecule type" value="Genomic_DNA"/>
</dbReference>
<dbReference type="EMBL" id="CP002686">
    <property type="protein sequence ID" value="AEE78162.1"/>
    <property type="molecule type" value="Genomic_DNA"/>
</dbReference>
<dbReference type="EMBL" id="AY050368">
    <property type="protein sequence ID" value="AAK91385.1"/>
    <property type="molecule type" value="mRNA"/>
</dbReference>
<dbReference type="EMBL" id="AY094040">
    <property type="protein sequence ID" value="AAM16196.1"/>
    <property type="molecule type" value="mRNA"/>
</dbReference>
<dbReference type="PIR" id="T45703">
    <property type="entry name" value="T45703"/>
</dbReference>
<dbReference type="RefSeq" id="NP_566884.1">
    <property type="nucleotide sequence ID" value="NM_114513.6"/>
</dbReference>
<dbReference type="SMR" id="Q42541"/>
<dbReference type="BioGRID" id="9116">
    <property type="interactions" value="1"/>
</dbReference>
<dbReference type="FunCoup" id="Q42541">
    <property type="interactions" value="3653"/>
</dbReference>
<dbReference type="STRING" id="3702.Q42541"/>
<dbReference type="PaxDb" id="3702-AT3G46460.1"/>
<dbReference type="ProteomicsDB" id="228650"/>
<dbReference type="EnsemblPlants" id="AT3G46460.1">
    <property type="protein sequence ID" value="AT3G46460.1"/>
    <property type="gene ID" value="AT3G46460"/>
</dbReference>
<dbReference type="GeneID" id="823796"/>
<dbReference type="Gramene" id="AT3G46460.1">
    <property type="protein sequence ID" value="AT3G46460.1"/>
    <property type="gene ID" value="AT3G46460"/>
</dbReference>
<dbReference type="KEGG" id="ath:AT3G46460"/>
<dbReference type="Araport" id="AT3G46460"/>
<dbReference type="TAIR" id="AT3G46460">
    <property type="gene designation" value="UBC13"/>
</dbReference>
<dbReference type="eggNOG" id="KOG0425">
    <property type="taxonomic scope" value="Eukaryota"/>
</dbReference>
<dbReference type="HOGENOM" id="CLU_030988_10_1_1"/>
<dbReference type="InParanoid" id="Q42541"/>
<dbReference type="OMA" id="APDGMFT"/>
<dbReference type="OrthoDB" id="19692at2759"/>
<dbReference type="PhylomeDB" id="Q42541"/>
<dbReference type="UniPathway" id="UPA00143"/>
<dbReference type="PRO" id="PR:Q42541"/>
<dbReference type="Proteomes" id="UP000006548">
    <property type="component" value="Chromosome 3"/>
</dbReference>
<dbReference type="ExpressionAtlas" id="Q42541">
    <property type="expression patterns" value="baseline and differential"/>
</dbReference>
<dbReference type="GO" id="GO:0005829">
    <property type="term" value="C:cytosol"/>
    <property type="evidence" value="ECO:0007005"/>
    <property type="project" value="TAIR"/>
</dbReference>
<dbReference type="GO" id="GO:0005524">
    <property type="term" value="F:ATP binding"/>
    <property type="evidence" value="ECO:0007669"/>
    <property type="project" value="UniProtKB-KW"/>
</dbReference>
<dbReference type="GO" id="GO:0061631">
    <property type="term" value="F:ubiquitin conjugating enzyme activity"/>
    <property type="evidence" value="ECO:0007669"/>
    <property type="project" value="UniProtKB-EC"/>
</dbReference>
<dbReference type="GO" id="GO:0004842">
    <property type="term" value="F:ubiquitin-protein transferase activity"/>
    <property type="evidence" value="ECO:0000314"/>
    <property type="project" value="TAIR"/>
</dbReference>
<dbReference type="GO" id="GO:0016567">
    <property type="term" value="P:protein ubiquitination"/>
    <property type="evidence" value="ECO:0007669"/>
    <property type="project" value="UniProtKB-UniPathway"/>
</dbReference>
<dbReference type="GO" id="GO:0006511">
    <property type="term" value="P:ubiquitin-dependent protein catabolic process"/>
    <property type="evidence" value="ECO:0000314"/>
    <property type="project" value="TAIR"/>
</dbReference>
<dbReference type="CDD" id="cd23795">
    <property type="entry name" value="UBCc_UBE2G1"/>
    <property type="match status" value="1"/>
</dbReference>
<dbReference type="FunFam" id="3.10.110.10:FF:000025">
    <property type="entry name" value="ubiquitin-conjugating enzyme E2 7"/>
    <property type="match status" value="1"/>
</dbReference>
<dbReference type="Gene3D" id="3.10.110.10">
    <property type="entry name" value="Ubiquitin Conjugating Enzyme"/>
    <property type="match status" value="1"/>
</dbReference>
<dbReference type="InterPro" id="IPR050113">
    <property type="entry name" value="Ub_conjugating_enzyme"/>
</dbReference>
<dbReference type="InterPro" id="IPR000608">
    <property type="entry name" value="UBQ-conjugat_E2_core"/>
</dbReference>
<dbReference type="InterPro" id="IPR023313">
    <property type="entry name" value="UBQ-conjugating_AS"/>
</dbReference>
<dbReference type="InterPro" id="IPR016135">
    <property type="entry name" value="UBQ-conjugating_enzyme/RWD"/>
</dbReference>
<dbReference type="PANTHER" id="PTHR24067">
    <property type="entry name" value="UBIQUITIN-CONJUGATING ENZYME E2"/>
    <property type="match status" value="1"/>
</dbReference>
<dbReference type="Pfam" id="PF00179">
    <property type="entry name" value="UQ_con"/>
    <property type="match status" value="1"/>
</dbReference>
<dbReference type="SMART" id="SM00212">
    <property type="entry name" value="UBCc"/>
    <property type="match status" value="1"/>
</dbReference>
<dbReference type="SUPFAM" id="SSF54495">
    <property type="entry name" value="UBC-like"/>
    <property type="match status" value="1"/>
</dbReference>
<dbReference type="PROSITE" id="PS00183">
    <property type="entry name" value="UBC_1"/>
    <property type="match status" value="1"/>
</dbReference>
<dbReference type="PROSITE" id="PS50127">
    <property type="entry name" value="UBC_2"/>
    <property type="match status" value="1"/>
</dbReference>
<gene>
    <name type="primary">UBC13</name>
    <name type="ordered locus">At3g46460</name>
    <name type="ORF">F18L15.180</name>
</gene>
<comment type="function">
    <text evidence="4">Accepts the ubiquitin from the E1 complex and catalyzes its covalent attachment to other proteins. Involved in the formation of multiubiquitin chains. Signal the protein for selective degradation.</text>
</comment>
<comment type="catalytic activity">
    <reaction evidence="1 2">
        <text>S-ubiquitinyl-[E1 ubiquitin-activating enzyme]-L-cysteine + [E2 ubiquitin-conjugating enzyme]-L-cysteine = [E1 ubiquitin-activating enzyme]-L-cysteine + S-ubiquitinyl-[E2 ubiquitin-conjugating enzyme]-L-cysteine.</text>
        <dbReference type="EC" id="2.3.2.23"/>
    </reaction>
</comment>
<comment type="pathway">
    <text evidence="1">Protein modification; protein ubiquitination.</text>
</comment>
<comment type="induction">
    <text evidence="3">Up-regulated by syringolin, a cell death-inducing chemical.</text>
</comment>
<comment type="similarity">
    <text evidence="1">Belongs to the ubiquitin-conjugating enzyme family.</text>
</comment>
<comment type="caution">
    <text evidence="5">This protein has been named UBC13 according to the nomenclature proposed in PubMed:16339806, but it is not the same as the UBC13 described in several publications that correspond to the protein named UBC35 in our nomenclature.</text>
</comment>
<keyword id="KW-0067">ATP-binding</keyword>
<keyword id="KW-0547">Nucleotide-binding</keyword>
<keyword id="KW-1185">Reference proteome</keyword>
<keyword id="KW-0808">Transferase</keyword>
<keyword id="KW-0833">Ubl conjugation pathway</keyword>
<organism>
    <name type="scientific">Arabidopsis thaliana</name>
    <name type="common">Mouse-ear cress</name>
    <dbReference type="NCBI Taxonomy" id="3702"/>
    <lineage>
        <taxon>Eukaryota</taxon>
        <taxon>Viridiplantae</taxon>
        <taxon>Streptophyta</taxon>
        <taxon>Embryophyta</taxon>
        <taxon>Tracheophyta</taxon>
        <taxon>Spermatophyta</taxon>
        <taxon>Magnoliopsida</taxon>
        <taxon>eudicotyledons</taxon>
        <taxon>Gunneridae</taxon>
        <taxon>Pentapetalae</taxon>
        <taxon>rosids</taxon>
        <taxon>malvids</taxon>
        <taxon>Brassicales</taxon>
        <taxon>Brassicaceae</taxon>
        <taxon>Camelineae</taxon>
        <taxon>Arabidopsis</taxon>
    </lineage>
</organism>
<sequence>MNSQACLLLQKQLKDLCKHPVDGFSAGLVDEKNIFEWSVTIIGPPDTLYEGGFFYAIMSFPQNYPNSPPTVRFTSDIWHPNVYPDGRVCISILHPPGDDPSGYELASERWTPVHTVESIMLSIISMLSGPNDESPANVEAAKEWREKRDEFKKKVSRCVRKSQEMF</sequence>
<name>UBC13_ARATH</name>
<evidence type="ECO:0000255" key="1">
    <source>
        <dbReference type="PROSITE-ProRule" id="PRU00388"/>
    </source>
</evidence>
<evidence type="ECO:0000255" key="2">
    <source>
        <dbReference type="PROSITE-ProRule" id="PRU10133"/>
    </source>
</evidence>
<evidence type="ECO:0000269" key="3">
    <source>
    </source>
</evidence>
<evidence type="ECO:0000269" key="4">
    <source>
    </source>
</evidence>
<evidence type="ECO:0000305" key="5"/>